<gene>
    <name evidence="1" type="primary">lolD</name>
    <name type="ordered locus">Rfer_3231</name>
</gene>
<keyword id="KW-0067">ATP-binding</keyword>
<keyword id="KW-0997">Cell inner membrane</keyword>
<keyword id="KW-1003">Cell membrane</keyword>
<keyword id="KW-0472">Membrane</keyword>
<keyword id="KW-0547">Nucleotide-binding</keyword>
<keyword id="KW-1185">Reference proteome</keyword>
<keyword id="KW-1278">Translocase</keyword>
<keyword id="KW-0813">Transport</keyword>
<sequence>MGDIVLSARAITKRFTEGRLDVTVLQGVDLDVRAGETLAIVGASGSGKSTLLHLMGGLDAPTSGSVFLHGQDLAHQSAAAQGRLRNQYLGFVYQFHHLLPEFSALDNVAMPLWIRRLAPAESTHTATEMLAKVGLQERLAHRPSELSGGERQRVAIARALVTRPACVLADEPTGNLDRSTANGVFELMLELARVQGTAFVMVTHDESLAERCSRRIRLVQGRLLEAF</sequence>
<feature type="chain" id="PRO_0000272135" description="Lipoprotein-releasing system ATP-binding protein LolD">
    <location>
        <begin position="1"/>
        <end position="227"/>
    </location>
</feature>
<feature type="domain" description="ABC transporter" evidence="1">
    <location>
        <begin position="6"/>
        <end position="227"/>
    </location>
</feature>
<feature type="binding site" evidence="1">
    <location>
        <begin position="42"/>
        <end position="49"/>
    </location>
    <ligand>
        <name>ATP</name>
        <dbReference type="ChEBI" id="CHEBI:30616"/>
    </ligand>
</feature>
<comment type="function">
    <text evidence="1">Part of the ABC transporter complex LolCDE involved in the translocation of mature outer membrane-directed lipoproteins, from the inner membrane to the periplasmic chaperone, LolA. Responsible for the formation of the LolA-lipoprotein complex in an ATP-dependent manner.</text>
</comment>
<comment type="subunit">
    <text evidence="1">The complex is composed of two ATP-binding proteins (LolD) and two transmembrane proteins (LolC and LolE).</text>
</comment>
<comment type="subcellular location">
    <subcellularLocation>
        <location evidence="1">Cell inner membrane</location>
        <topology evidence="1">Peripheral membrane protein</topology>
    </subcellularLocation>
</comment>
<comment type="similarity">
    <text evidence="1">Belongs to the ABC transporter superfamily. Lipoprotein translocase (TC 3.A.1.125) family.</text>
</comment>
<comment type="sequence caution" evidence="2">
    <conflict type="erroneous initiation">
        <sequence resource="EMBL-CDS" id="ABD70940"/>
    </conflict>
</comment>
<name>LOLD_ALBFT</name>
<dbReference type="EC" id="7.6.2.-" evidence="1"/>
<dbReference type="EMBL" id="CP000267">
    <property type="protein sequence ID" value="ABD70940.1"/>
    <property type="status" value="ALT_INIT"/>
    <property type="molecule type" value="Genomic_DNA"/>
</dbReference>
<dbReference type="RefSeq" id="WP_041792630.1">
    <property type="nucleotide sequence ID" value="NC_007908.1"/>
</dbReference>
<dbReference type="SMR" id="Q21TG3"/>
<dbReference type="STRING" id="338969.Rfer_3231"/>
<dbReference type="KEGG" id="rfr:Rfer_3231"/>
<dbReference type="eggNOG" id="COG1136">
    <property type="taxonomic scope" value="Bacteria"/>
</dbReference>
<dbReference type="HOGENOM" id="CLU_000604_1_22_4"/>
<dbReference type="OrthoDB" id="9802264at2"/>
<dbReference type="Proteomes" id="UP000008332">
    <property type="component" value="Chromosome"/>
</dbReference>
<dbReference type="GO" id="GO:0005886">
    <property type="term" value="C:plasma membrane"/>
    <property type="evidence" value="ECO:0007669"/>
    <property type="project" value="UniProtKB-SubCell"/>
</dbReference>
<dbReference type="GO" id="GO:0005524">
    <property type="term" value="F:ATP binding"/>
    <property type="evidence" value="ECO:0007669"/>
    <property type="project" value="UniProtKB-KW"/>
</dbReference>
<dbReference type="GO" id="GO:0016887">
    <property type="term" value="F:ATP hydrolysis activity"/>
    <property type="evidence" value="ECO:0007669"/>
    <property type="project" value="InterPro"/>
</dbReference>
<dbReference type="GO" id="GO:0022857">
    <property type="term" value="F:transmembrane transporter activity"/>
    <property type="evidence" value="ECO:0007669"/>
    <property type="project" value="TreeGrafter"/>
</dbReference>
<dbReference type="GO" id="GO:0044874">
    <property type="term" value="P:lipoprotein localization to outer membrane"/>
    <property type="evidence" value="ECO:0007669"/>
    <property type="project" value="TreeGrafter"/>
</dbReference>
<dbReference type="GO" id="GO:0089705">
    <property type="term" value="P:protein localization to outer membrane"/>
    <property type="evidence" value="ECO:0007669"/>
    <property type="project" value="TreeGrafter"/>
</dbReference>
<dbReference type="CDD" id="cd03255">
    <property type="entry name" value="ABC_MJ0796_LolCDE_FtsE"/>
    <property type="match status" value="1"/>
</dbReference>
<dbReference type="FunFam" id="3.40.50.300:FF:000230">
    <property type="entry name" value="Lipoprotein-releasing system ATP-binding protein LolD"/>
    <property type="match status" value="1"/>
</dbReference>
<dbReference type="Gene3D" id="3.40.50.300">
    <property type="entry name" value="P-loop containing nucleotide triphosphate hydrolases"/>
    <property type="match status" value="1"/>
</dbReference>
<dbReference type="InterPro" id="IPR003593">
    <property type="entry name" value="AAA+_ATPase"/>
</dbReference>
<dbReference type="InterPro" id="IPR003439">
    <property type="entry name" value="ABC_transporter-like_ATP-bd"/>
</dbReference>
<dbReference type="InterPro" id="IPR017871">
    <property type="entry name" value="ABC_transporter-like_CS"/>
</dbReference>
<dbReference type="InterPro" id="IPR015854">
    <property type="entry name" value="ABC_transpr_LolD-like"/>
</dbReference>
<dbReference type="InterPro" id="IPR011924">
    <property type="entry name" value="LolD_lipo_ATP-bd"/>
</dbReference>
<dbReference type="InterPro" id="IPR017911">
    <property type="entry name" value="MacB-like_ATP-bd"/>
</dbReference>
<dbReference type="InterPro" id="IPR027417">
    <property type="entry name" value="P-loop_NTPase"/>
</dbReference>
<dbReference type="NCBIfam" id="TIGR02211">
    <property type="entry name" value="LolD_lipo_ex"/>
    <property type="match status" value="1"/>
</dbReference>
<dbReference type="PANTHER" id="PTHR24220">
    <property type="entry name" value="IMPORT ATP-BINDING PROTEIN"/>
    <property type="match status" value="1"/>
</dbReference>
<dbReference type="PANTHER" id="PTHR24220:SF689">
    <property type="entry name" value="LIPOPROTEIN-RELEASING SYSTEM ATP-BINDING PROTEIN LOLD"/>
    <property type="match status" value="1"/>
</dbReference>
<dbReference type="Pfam" id="PF00005">
    <property type="entry name" value="ABC_tran"/>
    <property type="match status" value="1"/>
</dbReference>
<dbReference type="SMART" id="SM00382">
    <property type="entry name" value="AAA"/>
    <property type="match status" value="1"/>
</dbReference>
<dbReference type="SUPFAM" id="SSF52540">
    <property type="entry name" value="P-loop containing nucleoside triphosphate hydrolases"/>
    <property type="match status" value="1"/>
</dbReference>
<dbReference type="PROSITE" id="PS00211">
    <property type="entry name" value="ABC_TRANSPORTER_1"/>
    <property type="match status" value="1"/>
</dbReference>
<dbReference type="PROSITE" id="PS50893">
    <property type="entry name" value="ABC_TRANSPORTER_2"/>
    <property type="match status" value="1"/>
</dbReference>
<dbReference type="PROSITE" id="PS51244">
    <property type="entry name" value="LOLD"/>
    <property type="match status" value="1"/>
</dbReference>
<accession>Q21TG3</accession>
<reference key="1">
    <citation type="submission" date="2006-02" db="EMBL/GenBank/DDBJ databases">
        <title>Complete sequence of chromosome of Rhodoferax ferrireducens DSM 15236.</title>
        <authorList>
            <person name="Copeland A."/>
            <person name="Lucas S."/>
            <person name="Lapidus A."/>
            <person name="Barry K."/>
            <person name="Detter J.C."/>
            <person name="Glavina del Rio T."/>
            <person name="Hammon N."/>
            <person name="Israni S."/>
            <person name="Pitluck S."/>
            <person name="Brettin T."/>
            <person name="Bruce D."/>
            <person name="Han C."/>
            <person name="Tapia R."/>
            <person name="Gilna P."/>
            <person name="Kiss H."/>
            <person name="Schmutz J."/>
            <person name="Larimer F."/>
            <person name="Land M."/>
            <person name="Kyrpides N."/>
            <person name="Ivanova N."/>
            <person name="Richardson P."/>
        </authorList>
    </citation>
    <scope>NUCLEOTIDE SEQUENCE [LARGE SCALE GENOMIC DNA]</scope>
    <source>
        <strain>ATCC BAA-621 / DSM 15236 / T118</strain>
    </source>
</reference>
<evidence type="ECO:0000255" key="1">
    <source>
        <dbReference type="HAMAP-Rule" id="MF_01708"/>
    </source>
</evidence>
<evidence type="ECO:0000305" key="2"/>
<protein>
    <recommendedName>
        <fullName evidence="1">Lipoprotein-releasing system ATP-binding protein LolD</fullName>
        <ecNumber evidence="1">7.6.2.-</ecNumber>
    </recommendedName>
</protein>
<proteinExistence type="inferred from homology"/>
<organism>
    <name type="scientific">Albidiferax ferrireducens (strain ATCC BAA-621 / DSM 15236 / T118)</name>
    <name type="common">Rhodoferax ferrireducens</name>
    <dbReference type="NCBI Taxonomy" id="338969"/>
    <lineage>
        <taxon>Bacteria</taxon>
        <taxon>Pseudomonadati</taxon>
        <taxon>Pseudomonadota</taxon>
        <taxon>Betaproteobacteria</taxon>
        <taxon>Burkholderiales</taxon>
        <taxon>Comamonadaceae</taxon>
        <taxon>Rhodoferax</taxon>
    </lineage>
</organism>